<evidence type="ECO:0000255" key="1">
    <source>
        <dbReference type="HAMAP-Rule" id="MF_00235"/>
    </source>
</evidence>
<reference key="1">
    <citation type="submission" date="2006-11" db="EMBL/GenBank/DDBJ databases">
        <title>Sequence of Campylobacter fetus subsp. fetus 82-40.</title>
        <authorList>
            <person name="Fouts D.E."/>
            <person name="Nelson K.E."/>
        </authorList>
    </citation>
    <scope>NUCLEOTIDE SEQUENCE [LARGE SCALE GENOMIC DNA]</scope>
    <source>
        <strain>82-40</strain>
    </source>
</reference>
<sequence length="191" mass="21214">MKKLFLIIGAPGSGKTTDASMIAANDDKFAHYSTGDLLRAEVASGSELGKLIDSFISKGNLVPLEVVVNTIISAIRSSDKNYILIDGYPRSEEQMRELDRVLASQSEVKLDGVIEVDVSEEVARNRVLGRARGADDNNEVFNNRMKVYLDPIKEIRAFYNDKKILHMINGERTIETIVADMKNLIENLIKG</sequence>
<feature type="chain" id="PRO_1000058809" description="Adenylate kinase">
    <location>
        <begin position="1"/>
        <end position="191"/>
    </location>
</feature>
<feature type="region of interest" description="NMP" evidence="1">
    <location>
        <begin position="33"/>
        <end position="62"/>
    </location>
</feature>
<feature type="region of interest" description="LID" evidence="1">
    <location>
        <begin position="129"/>
        <end position="135"/>
    </location>
</feature>
<feature type="binding site" evidence="1">
    <location>
        <begin position="12"/>
        <end position="17"/>
    </location>
    <ligand>
        <name>ATP</name>
        <dbReference type="ChEBI" id="CHEBI:30616"/>
    </ligand>
</feature>
<feature type="binding site" evidence="1">
    <location>
        <position position="34"/>
    </location>
    <ligand>
        <name>AMP</name>
        <dbReference type="ChEBI" id="CHEBI:456215"/>
    </ligand>
</feature>
<feature type="binding site" evidence="1">
    <location>
        <position position="39"/>
    </location>
    <ligand>
        <name>AMP</name>
        <dbReference type="ChEBI" id="CHEBI:456215"/>
    </ligand>
</feature>
<feature type="binding site" evidence="1">
    <location>
        <begin position="60"/>
        <end position="62"/>
    </location>
    <ligand>
        <name>AMP</name>
        <dbReference type="ChEBI" id="CHEBI:456215"/>
    </ligand>
</feature>
<feature type="binding site" evidence="1">
    <location>
        <begin position="87"/>
        <end position="90"/>
    </location>
    <ligand>
        <name>AMP</name>
        <dbReference type="ChEBI" id="CHEBI:456215"/>
    </ligand>
</feature>
<feature type="binding site" evidence="1">
    <location>
        <position position="94"/>
    </location>
    <ligand>
        <name>AMP</name>
        <dbReference type="ChEBI" id="CHEBI:456215"/>
    </ligand>
</feature>
<feature type="binding site" evidence="1">
    <location>
        <position position="130"/>
    </location>
    <ligand>
        <name>ATP</name>
        <dbReference type="ChEBI" id="CHEBI:30616"/>
    </ligand>
</feature>
<feature type="binding site" evidence="1">
    <location>
        <position position="132"/>
    </location>
    <ligand>
        <name>AMP</name>
        <dbReference type="ChEBI" id="CHEBI:456215"/>
    </ligand>
</feature>
<feature type="binding site" evidence="1">
    <location>
        <position position="144"/>
    </location>
    <ligand>
        <name>AMP</name>
        <dbReference type="ChEBI" id="CHEBI:456215"/>
    </ligand>
</feature>
<feature type="binding site" evidence="1">
    <location>
        <position position="172"/>
    </location>
    <ligand>
        <name>ATP</name>
        <dbReference type="ChEBI" id="CHEBI:30616"/>
    </ligand>
</feature>
<name>KAD_CAMFF</name>
<accession>A0RQ72</accession>
<comment type="function">
    <text evidence="1">Catalyzes the reversible transfer of the terminal phosphate group between ATP and AMP. Plays an important role in cellular energy homeostasis and in adenine nucleotide metabolism.</text>
</comment>
<comment type="catalytic activity">
    <reaction evidence="1">
        <text>AMP + ATP = 2 ADP</text>
        <dbReference type="Rhea" id="RHEA:12973"/>
        <dbReference type="ChEBI" id="CHEBI:30616"/>
        <dbReference type="ChEBI" id="CHEBI:456215"/>
        <dbReference type="ChEBI" id="CHEBI:456216"/>
        <dbReference type="EC" id="2.7.4.3"/>
    </reaction>
</comment>
<comment type="pathway">
    <text evidence="1">Purine metabolism; AMP biosynthesis via salvage pathway; AMP from ADP: step 1/1.</text>
</comment>
<comment type="subunit">
    <text evidence="1">Monomer.</text>
</comment>
<comment type="subcellular location">
    <subcellularLocation>
        <location evidence="1">Cytoplasm</location>
    </subcellularLocation>
</comment>
<comment type="domain">
    <text evidence="1">Consists of three domains, a large central CORE domain and two small peripheral domains, NMPbind and LID, which undergo movements during catalysis. The LID domain closes over the site of phosphoryl transfer upon ATP binding. Assembling and dissambling the active center during each catalytic cycle provides an effective means to prevent ATP hydrolysis.</text>
</comment>
<comment type="similarity">
    <text evidence="1">Belongs to the adenylate kinase family.</text>
</comment>
<dbReference type="EC" id="2.7.4.3" evidence="1"/>
<dbReference type="EMBL" id="CP000487">
    <property type="protein sequence ID" value="ABK81778.1"/>
    <property type="molecule type" value="Genomic_DNA"/>
</dbReference>
<dbReference type="RefSeq" id="WP_002849858.1">
    <property type="nucleotide sequence ID" value="NC_008599.1"/>
</dbReference>
<dbReference type="SMR" id="A0RQ72"/>
<dbReference type="KEGG" id="cff:CFF8240_1197"/>
<dbReference type="eggNOG" id="COG0563">
    <property type="taxonomic scope" value="Bacteria"/>
</dbReference>
<dbReference type="HOGENOM" id="CLU_032354_4_1_7"/>
<dbReference type="UniPathway" id="UPA00588">
    <property type="reaction ID" value="UER00649"/>
</dbReference>
<dbReference type="Proteomes" id="UP000000760">
    <property type="component" value="Chromosome"/>
</dbReference>
<dbReference type="GO" id="GO:0005737">
    <property type="term" value="C:cytoplasm"/>
    <property type="evidence" value="ECO:0007669"/>
    <property type="project" value="UniProtKB-SubCell"/>
</dbReference>
<dbReference type="GO" id="GO:0004017">
    <property type="term" value="F:adenylate kinase activity"/>
    <property type="evidence" value="ECO:0007669"/>
    <property type="project" value="UniProtKB-UniRule"/>
</dbReference>
<dbReference type="GO" id="GO:0005524">
    <property type="term" value="F:ATP binding"/>
    <property type="evidence" value="ECO:0007669"/>
    <property type="project" value="UniProtKB-UniRule"/>
</dbReference>
<dbReference type="GO" id="GO:0044209">
    <property type="term" value="P:AMP salvage"/>
    <property type="evidence" value="ECO:0007669"/>
    <property type="project" value="UniProtKB-UniRule"/>
</dbReference>
<dbReference type="CDD" id="cd01428">
    <property type="entry name" value="ADK"/>
    <property type="match status" value="1"/>
</dbReference>
<dbReference type="Gene3D" id="3.40.50.300">
    <property type="entry name" value="P-loop containing nucleotide triphosphate hydrolases"/>
    <property type="match status" value="1"/>
</dbReference>
<dbReference type="HAMAP" id="MF_00235">
    <property type="entry name" value="Adenylate_kinase_Adk"/>
    <property type="match status" value="1"/>
</dbReference>
<dbReference type="InterPro" id="IPR000850">
    <property type="entry name" value="Adenylat/UMP-CMP_kin"/>
</dbReference>
<dbReference type="InterPro" id="IPR033690">
    <property type="entry name" value="Adenylat_kinase_CS"/>
</dbReference>
<dbReference type="InterPro" id="IPR027417">
    <property type="entry name" value="P-loop_NTPase"/>
</dbReference>
<dbReference type="NCBIfam" id="NF001384">
    <property type="entry name" value="PRK00279.2-2"/>
    <property type="match status" value="1"/>
</dbReference>
<dbReference type="PANTHER" id="PTHR23359">
    <property type="entry name" value="NUCLEOTIDE KINASE"/>
    <property type="match status" value="1"/>
</dbReference>
<dbReference type="Pfam" id="PF00406">
    <property type="entry name" value="ADK"/>
    <property type="match status" value="1"/>
</dbReference>
<dbReference type="PRINTS" id="PR00094">
    <property type="entry name" value="ADENYLTKNASE"/>
</dbReference>
<dbReference type="SUPFAM" id="SSF52540">
    <property type="entry name" value="P-loop containing nucleoside triphosphate hydrolases"/>
    <property type="match status" value="1"/>
</dbReference>
<dbReference type="PROSITE" id="PS00113">
    <property type="entry name" value="ADENYLATE_KINASE"/>
    <property type="match status" value="1"/>
</dbReference>
<gene>
    <name evidence="1" type="primary">adk</name>
    <name type="ordered locus">CFF8240_1197</name>
</gene>
<protein>
    <recommendedName>
        <fullName evidence="1">Adenylate kinase</fullName>
        <shortName evidence="1">AK</shortName>
        <ecNumber evidence="1">2.7.4.3</ecNumber>
    </recommendedName>
    <alternativeName>
        <fullName evidence="1">ATP-AMP transphosphorylase</fullName>
    </alternativeName>
    <alternativeName>
        <fullName evidence="1">ATP:AMP phosphotransferase</fullName>
    </alternativeName>
    <alternativeName>
        <fullName evidence="1">Adenylate monophosphate kinase</fullName>
    </alternativeName>
</protein>
<keyword id="KW-0067">ATP-binding</keyword>
<keyword id="KW-0963">Cytoplasm</keyword>
<keyword id="KW-0418">Kinase</keyword>
<keyword id="KW-0545">Nucleotide biosynthesis</keyword>
<keyword id="KW-0547">Nucleotide-binding</keyword>
<keyword id="KW-0808">Transferase</keyword>
<proteinExistence type="inferred from homology"/>
<organism>
    <name type="scientific">Campylobacter fetus subsp. fetus (strain 82-40)</name>
    <dbReference type="NCBI Taxonomy" id="360106"/>
    <lineage>
        <taxon>Bacteria</taxon>
        <taxon>Pseudomonadati</taxon>
        <taxon>Campylobacterota</taxon>
        <taxon>Epsilonproteobacteria</taxon>
        <taxon>Campylobacterales</taxon>
        <taxon>Campylobacteraceae</taxon>
        <taxon>Campylobacter</taxon>
    </lineage>
</organism>